<evidence type="ECO:0000255" key="1"/>
<evidence type="ECO:0000255" key="2">
    <source>
        <dbReference type="PROSITE-ProRule" id="PRU00114"/>
    </source>
</evidence>
<sequence>MAPRLLFCLVLCFLRAEPTNAGVIQTPRHKVTGKGQEATLWCEPISGHSAVFWYRQTIVQGLEFLTYFRNQAPIDDSGMPKERFSAQMPNQSHSTLKIQSTQPQDSAVYLCASSLSTGVSYEQYFGPGTRLTVL</sequence>
<name>TVB7_MOUSE</name>
<dbReference type="PIR" id="A02002">
    <property type="entry name" value="RWMSB3"/>
</dbReference>
<dbReference type="SMR" id="P06320"/>
<dbReference type="FunCoup" id="P06320">
    <property type="interactions" value="1140"/>
</dbReference>
<dbReference type="IntAct" id="P06320">
    <property type="interactions" value="1"/>
</dbReference>
<dbReference type="GlyGen" id="P06320">
    <property type="glycosylation" value="1 site"/>
</dbReference>
<dbReference type="ABCD" id="P06320">
    <property type="antibodies" value="1 sequenced antibody"/>
</dbReference>
<dbReference type="UCSC" id="uc057acx.1">
    <property type="organism name" value="mouse"/>
</dbReference>
<dbReference type="InParanoid" id="P06320"/>
<dbReference type="Proteomes" id="UP000000589">
    <property type="component" value="Unplaced"/>
</dbReference>
<dbReference type="RNAct" id="P06320">
    <property type="molecule type" value="protein"/>
</dbReference>
<dbReference type="GO" id="GO:0005886">
    <property type="term" value="C:plasma membrane"/>
    <property type="evidence" value="ECO:0000318"/>
    <property type="project" value="GO_Central"/>
</dbReference>
<dbReference type="GO" id="GO:0042101">
    <property type="term" value="C:T cell receptor complex"/>
    <property type="evidence" value="ECO:0007669"/>
    <property type="project" value="UniProtKB-KW"/>
</dbReference>
<dbReference type="GO" id="GO:0002250">
    <property type="term" value="P:adaptive immune response"/>
    <property type="evidence" value="ECO:0007669"/>
    <property type="project" value="UniProtKB-KW"/>
</dbReference>
<dbReference type="GO" id="GO:0007166">
    <property type="term" value="P:cell surface receptor signaling pathway"/>
    <property type="evidence" value="ECO:0000318"/>
    <property type="project" value="GO_Central"/>
</dbReference>
<dbReference type="CDD" id="cd05899">
    <property type="entry name" value="IgV_TCR_beta"/>
    <property type="match status" value="1"/>
</dbReference>
<dbReference type="FunFam" id="2.60.40.10:FF:002491">
    <property type="entry name" value="T cell receptor beta variable 12-4"/>
    <property type="match status" value="1"/>
</dbReference>
<dbReference type="Gene3D" id="2.60.40.10">
    <property type="entry name" value="Immunoglobulins"/>
    <property type="match status" value="1"/>
</dbReference>
<dbReference type="InterPro" id="IPR007110">
    <property type="entry name" value="Ig-like_dom"/>
</dbReference>
<dbReference type="InterPro" id="IPR036179">
    <property type="entry name" value="Ig-like_dom_sf"/>
</dbReference>
<dbReference type="InterPro" id="IPR013783">
    <property type="entry name" value="Ig-like_fold"/>
</dbReference>
<dbReference type="InterPro" id="IPR003599">
    <property type="entry name" value="Ig_sub"/>
</dbReference>
<dbReference type="InterPro" id="IPR013106">
    <property type="entry name" value="Ig_V-set"/>
</dbReference>
<dbReference type="InterPro" id="IPR050413">
    <property type="entry name" value="TCR_beta_variable"/>
</dbReference>
<dbReference type="PANTHER" id="PTHR23268:SF14">
    <property type="entry name" value="T CELL RECEPTOR BETA VARIABLE 12-3-RELATED"/>
    <property type="match status" value="1"/>
</dbReference>
<dbReference type="PANTHER" id="PTHR23268">
    <property type="entry name" value="T-CELL RECEPTOR BETA CHAIN"/>
    <property type="match status" value="1"/>
</dbReference>
<dbReference type="Pfam" id="PF07686">
    <property type="entry name" value="V-set"/>
    <property type="match status" value="1"/>
</dbReference>
<dbReference type="SMART" id="SM00409">
    <property type="entry name" value="IG"/>
    <property type="match status" value="1"/>
</dbReference>
<dbReference type="SMART" id="SM00406">
    <property type="entry name" value="IGv"/>
    <property type="match status" value="1"/>
</dbReference>
<dbReference type="SUPFAM" id="SSF48726">
    <property type="entry name" value="Immunoglobulin"/>
    <property type="match status" value="1"/>
</dbReference>
<dbReference type="PROSITE" id="PS50835">
    <property type="entry name" value="IG_LIKE"/>
    <property type="match status" value="1"/>
</dbReference>
<organism>
    <name type="scientific">Mus musculus</name>
    <name type="common">Mouse</name>
    <dbReference type="NCBI Taxonomy" id="10090"/>
    <lineage>
        <taxon>Eukaryota</taxon>
        <taxon>Metazoa</taxon>
        <taxon>Chordata</taxon>
        <taxon>Craniata</taxon>
        <taxon>Vertebrata</taxon>
        <taxon>Euteleostomi</taxon>
        <taxon>Mammalia</taxon>
        <taxon>Eutheria</taxon>
        <taxon>Euarchontoglires</taxon>
        <taxon>Glires</taxon>
        <taxon>Rodentia</taxon>
        <taxon>Myomorpha</taxon>
        <taxon>Muroidea</taxon>
        <taxon>Muridae</taxon>
        <taxon>Murinae</taxon>
        <taxon>Mus</taxon>
        <taxon>Mus</taxon>
    </lineage>
</organism>
<protein>
    <recommendedName>
        <fullName>T-cell receptor beta chain V region CTL-F3</fullName>
    </recommendedName>
</protein>
<feature type="signal peptide">
    <location>
        <begin position="1"/>
        <end position="19"/>
    </location>
</feature>
<feature type="chain" id="PRO_0000033605" description="T-cell receptor beta chain V region CTL-F3">
    <location>
        <begin position="20"/>
        <end position="134"/>
    </location>
</feature>
<feature type="region of interest" description="V segment">
    <location>
        <begin position="20"/>
        <end position="115"/>
    </location>
</feature>
<feature type="region of interest" description="D segment">
    <location>
        <begin position="116"/>
        <end position="119"/>
    </location>
</feature>
<feature type="region of interest" description="J segment">
    <location>
        <begin position="120"/>
        <end position="134"/>
    </location>
</feature>
<feature type="glycosylation site" description="N-linked (GlcNAc...) asparagine" evidence="1">
    <location>
        <position position="90"/>
    </location>
</feature>
<feature type="disulfide bond" evidence="2">
    <location>
        <begin position="42"/>
        <end position="111"/>
    </location>
</feature>
<feature type="non-terminal residue">
    <location>
        <position position="134"/>
    </location>
</feature>
<keyword id="KW-1064">Adaptive immunity</keyword>
<keyword id="KW-1015">Disulfide bond</keyword>
<keyword id="KW-0325">Glycoprotein</keyword>
<keyword id="KW-0391">Immunity</keyword>
<keyword id="KW-0393">Immunoglobulin domain</keyword>
<keyword id="KW-0675">Receptor</keyword>
<keyword id="KW-1185">Reference proteome</keyword>
<keyword id="KW-0732">Signal</keyword>
<keyword id="KW-1279">T cell receptor</keyword>
<proteinExistence type="predicted"/>
<reference key="1">
    <citation type="journal article" date="1986" name="EMBO J.">
        <title>T cell receptor genes in an alloreactive CTL clone: implications for rearrangement and germline diversity of variable gene segments.</title>
        <authorList>
            <person name="Chou H.S."/>
            <person name="Behlke M.A."/>
            <person name="Godambe S.A."/>
            <person name="Russell J.H."/>
            <person name="Brooks C.G."/>
            <person name="Loh D.Y."/>
        </authorList>
    </citation>
    <scope>NUCLEOTIDE SEQUENCE</scope>
</reference>
<accession>P06320</accession>